<protein>
    <recommendedName>
        <fullName evidence="2">Thymidine kinase</fullName>
        <ecNumber evidence="2">2.7.1.21</ecNumber>
    </recommendedName>
</protein>
<organism>
    <name type="scientific">Varicella-zoster virus (strain Dumas)</name>
    <name type="common">HHV-3</name>
    <name type="synonym">Human herpesvirus 3</name>
    <dbReference type="NCBI Taxonomy" id="10338"/>
    <lineage>
        <taxon>Viruses</taxon>
        <taxon>Duplodnaviria</taxon>
        <taxon>Heunggongvirae</taxon>
        <taxon>Peploviricota</taxon>
        <taxon>Herviviricetes</taxon>
        <taxon>Herpesvirales</taxon>
        <taxon>Orthoherpesviridae</taxon>
        <taxon>Alphaherpesvirinae</taxon>
        <taxon>Varicellovirus</taxon>
        <taxon>Varicellovirus humanalpha3</taxon>
        <taxon>Human herpesvirus 3</taxon>
    </lineage>
</organism>
<accession>P09250</accession>
<accession>O57298</accession>
<accession>P0C0E5</accession>
<accession>P0C0E7</accession>
<accession>P14341</accession>
<accession>P14342</accession>
<accession>P14343</accession>
<accession>P14344</accession>
<evidence type="ECO:0000250" key="1"/>
<evidence type="ECO:0000255" key="2">
    <source>
        <dbReference type="HAMAP-Rule" id="MF_04029"/>
    </source>
</evidence>
<name>KITH_VZVD</name>
<organismHost>
    <name type="scientific">Homo sapiens</name>
    <name type="common">Human</name>
    <dbReference type="NCBI Taxonomy" id="9606"/>
</organismHost>
<sequence length="341" mass="37817">MSTDKTDVKMGVLRIYLDGAYGIGKTTAAEEFLHHFAITPNRILLIGEPLSYWRNLAGEDAICGIYGTQTRRLNGDVSPEDAQRLTAHFQSLFCSPHAIMHAKISALMDTSTSDLVQVNKEPYKIMLSDRHPIASTICFPLSRYLVGDMSPAALPGLLFTLPAEPPGTNLVVCTVSLPSHLSRVSKRARPGETVNLPFVMVLRNVYIMLINTIIFLKTNNWHAGWNTLSFCNDVFKQKLQKSECIKLREVPGIEDTLFAVLKLPELCGEFGNILPLWAWGMETLSNCSRSMSPFVLSLEQTPQHAAQELKTLLPQMTPANMSSGAWNILKELVNAVQDNTS</sequence>
<proteinExistence type="inferred from homology"/>
<feature type="chain" id="PRO_0000175084" description="Thymidine kinase">
    <location>
        <begin position="1"/>
        <end position="341"/>
    </location>
</feature>
<feature type="active site" description="Proton acceptor" evidence="2">
    <location>
        <position position="48"/>
    </location>
</feature>
<feature type="binding site" evidence="2">
    <location>
        <begin position="19"/>
        <end position="26"/>
    </location>
    <ligand>
        <name>ATP</name>
        <dbReference type="ChEBI" id="CHEBI:30616"/>
    </ligand>
</feature>
<feature type="binding site" evidence="2">
    <location>
        <position position="66"/>
    </location>
    <ligand>
        <name>substrate</name>
    </ligand>
</feature>
<feature type="binding site" evidence="2">
    <location>
        <position position="90"/>
    </location>
    <ligand>
        <name>substrate</name>
    </ligand>
</feature>
<feature type="binding site" evidence="2">
    <location>
        <position position="183"/>
    </location>
    <ligand>
        <name>ATP</name>
        <dbReference type="ChEBI" id="CHEBI:30616"/>
    </ligand>
</feature>
<feature type="binding site" evidence="2">
    <location>
        <position position="189"/>
    </location>
    <ligand>
        <name>substrate</name>
    </ligand>
</feature>
<feature type="sequence variant" description="In strain: Isolate 7-1-3.">
    <original>R</original>
    <variation>Q</variation>
    <location>
        <position position="130"/>
    </location>
</feature>
<feature type="sequence variant" description="In strain: Isolate 40a2.">
    <original>L</original>
    <variation>P</variation>
    <location>
        <position position="154"/>
    </location>
</feature>
<feature type="sequence variant" description="In strain: Ellen, ppIIa, Isolate clinical GK, Isolate 7-1-3, Isolate 101 and Isolate 3-5-2/KB3.">
    <original>S</original>
    <variation>L</variation>
    <location>
        <position position="288"/>
    </location>
</feature>
<feature type="sequence variant" description="In strain: Isolate clinical GK.">
    <original>A</original>
    <variation>V</variation>
    <location>
        <position position="319"/>
    </location>
</feature>
<gene>
    <name evidence="2" type="primary">TK</name>
    <name type="ordered locus">ORF36</name>
</gene>
<reference key="1">
    <citation type="journal article" date="1986" name="J. Gen. Virol.">
        <title>The complete DNA sequence of varicella-zoster virus.</title>
        <authorList>
            <person name="Davison A.J."/>
            <person name="Scott J.E."/>
        </authorList>
    </citation>
    <scope>NUCLEOTIDE SEQUENCE [LARGE SCALE GENOMIC DNA]</scope>
</reference>
<reference key="2">
    <citation type="journal article" date="1988" name="J. Gen. Virol.">
        <title>Molecular analysis of the pyrimidine deoxyribonucleoside kinase gene of wild-type and acyclovir-resistant strains of varicella-zoster virus.</title>
        <authorList>
            <person name="Sawyer M.H."/>
            <person name="Inchauspe G."/>
            <person name="Biron K.K."/>
            <person name="Waters D.J."/>
            <person name="Straus S.E."/>
            <person name="Ostrove J.M."/>
        </authorList>
    </citation>
    <scope>NUCLEOTIDE SEQUENCE [GENOMIC DNA]</scope>
    <source>
        <strain>Ellen</strain>
        <strain>Isolate 101</strain>
        <strain>Isolate 3-5-2/KB3</strain>
        <strain>Isolate 40a2</strain>
        <strain>Isolate 7-1-3</strain>
        <strain>isolate clinical GK</strain>
        <strain>ppIIa</strain>
    </source>
</reference>
<keyword id="KW-0067">ATP-binding</keyword>
<keyword id="KW-0237">DNA synthesis</keyword>
<keyword id="KW-0244">Early protein</keyword>
<keyword id="KW-0418">Kinase</keyword>
<keyword id="KW-0547">Nucleotide-binding</keyword>
<keyword id="KW-1185">Reference proteome</keyword>
<keyword id="KW-0808">Transferase</keyword>
<dbReference type="EC" id="2.7.1.21" evidence="2"/>
<dbReference type="EMBL" id="X04370">
    <property type="protein sequence ID" value="CAA27919.1"/>
    <property type="molecule type" value="Genomic_DNA"/>
</dbReference>
<dbReference type="PIR" id="A27341">
    <property type="entry name" value="KIBE36"/>
</dbReference>
<dbReference type="PIR" id="A28930">
    <property type="entry name" value="KIBEEL"/>
</dbReference>
<dbReference type="PIR" id="B28930">
    <property type="entry name" value="KIBE73"/>
</dbReference>
<dbReference type="PIR" id="E28930">
    <property type="entry name" value="KIBEGK"/>
</dbReference>
<dbReference type="SMR" id="P09250"/>
<dbReference type="BindingDB" id="P09250"/>
<dbReference type="ChEMBL" id="CHEMBL4784"/>
<dbReference type="DrugBank" id="DB02765">
    <property type="generic name" value="R-9-(2-hydroxypropyl)adenine"/>
</dbReference>
<dbReference type="DrugBank" id="DB00194">
    <property type="generic name" value="Vidarabine"/>
</dbReference>
<dbReference type="DrugCentral" id="P09250"/>
<dbReference type="Proteomes" id="UP000002602">
    <property type="component" value="Genome"/>
</dbReference>
<dbReference type="GO" id="GO:0005524">
    <property type="term" value="F:ATP binding"/>
    <property type="evidence" value="ECO:0007669"/>
    <property type="project" value="UniProtKB-KW"/>
</dbReference>
<dbReference type="GO" id="GO:0004797">
    <property type="term" value="F:thymidine kinase activity"/>
    <property type="evidence" value="ECO:0007669"/>
    <property type="project" value="UniProtKB-EC"/>
</dbReference>
<dbReference type="GO" id="GO:0071897">
    <property type="term" value="P:DNA biosynthetic process"/>
    <property type="evidence" value="ECO:0007669"/>
    <property type="project" value="UniProtKB-KW"/>
</dbReference>
<dbReference type="GO" id="GO:0006230">
    <property type="term" value="P:TMP biosynthetic process"/>
    <property type="evidence" value="ECO:0007669"/>
    <property type="project" value="InterPro"/>
</dbReference>
<dbReference type="Gene3D" id="3.40.50.300">
    <property type="entry name" value="P-loop containing nucleotide triphosphate hydrolases"/>
    <property type="match status" value="1"/>
</dbReference>
<dbReference type="HAMAP" id="MF_04029">
    <property type="entry name" value="HSV_KITH"/>
    <property type="match status" value="1"/>
</dbReference>
<dbReference type="InterPro" id="IPR001889">
    <property type="entry name" value="Herpes_TK"/>
</dbReference>
<dbReference type="InterPro" id="IPR027417">
    <property type="entry name" value="P-loop_NTPase"/>
</dbReference>
<dbReference type="Pfam" id="PF00693">
    <property type="entry name" value="Herpes_TK"/>
    <property type="match status" value="1"/>
</dbReference>
<dbReference type="SUPFAM" id="SSF52540">
    <property type="entry name" value="P-loop containing nucleoside triphosphate hydrolases"/>
    <property type="match status" value="1"/>
</dbReference>
<comment type="function">
    <text evidence="2">Catalyzes the transfer of the gamma-phospho group of ATP to thymidine to generate dTMP in the salvage pathway of pyrimidine synthesis. The dTMP serves as a substrate for DNA polymerase during viral DNA replication. Allows the virus to be reactivated and to grow in non-proliferative cells lacking a high concentration of phosphorylated nucleic acid precursors.</text>
</comment>
<comment type="catalytic activity">
    <reaction evidence="2">
        <text>thymidine + ATP = dTMP + ADP + H(+)</text>
        <dbReference type="Rhea" id="RHEA:19129"/>
        <dbReference type="ChEBI" id="CHEBI:15378"/>
        <dbReference type="ChEBI" id="CHEBI:17748"/>
        <dbReference type="ChEBI" id="CHEBI:30616"/>
        <dbReference type="ChEBI" id="CHEBI:63528"/>
        <dbReference type="ChEBI" id="CHEBI:456216"/>
        <dbReference type="EC" id="2.7.1.21"/>
    </reaction>
</comment>
<comment type="subunit">
    <text evidence="2">Homodimer.</text>
</comment>
<comment type="miscellaneous">
    <text evidence="1">Phosphorylates and thereby activates certain drugs like acyclovir (ACV), valacyclovir, and famciclovir to a toxic form, that leads to successful suppression of the infection, while the uninfected cell does not have this ability because it lacks TK. Mutations in thymidine kinase may induce HSV resistance to antiviral therapies in immunocompromised patients. The most frequently observed resistant strains are unable to express TK and are avirulent in animal models of disease. Resistance may be acquired less frequently by selecting variants which no longer recognize ACV or ACV triphosphate as substrates but which retain normal functions (By similarity).</text>
</comment>
<comment type="similarity">
    <text evidence="2">Belongs to the herpesviridae thymidine kinase family.</text>
</comment>